<evidence type="ECO:0000255" key="1"/>
<evidence type="ECO:0000255" key="2">
    <source>
        <dbReference type="PROSITE-ProRule" id="PRU00274"/>
    </source>
</evidence>
<evidence type="ECO:0000269" key="3">
    <source>
    </source>
</evidence>
<evidence type="ECO:0000303" key="4">
    <source>
    </source>
</evidence>
<evidence type="ECO:0000305" key="5"/>
<evidence type="ECO:0000305" key="6">
    <source>
    </source>
</evidence>
<evidence type="ECO:0000312" key="7">
    <source>
        <dbReference type="EMBL" id="ABX80068.1"/>
    </source>
</evidence>
<feature type="signal peptide" evidence="1">
    <location>
        <begin position="1"/>
        <end position="19"/>
    </location>
</feature>
<feature type="chain" id="PRO_5002910663" description="Tabserin">
    <location>
        <begin position="20"/>
        <end position="248"/>
    </location>
</feature>
<feature type="domain" description="Peptidase S1" evidence="2">
    <location>
        <begin position="24"/>
        <end position="248"/>
    </location>
</feature>
<feature type="active site" description="Charge relay system" evidence="2">
    <location>
        <position position="64"/>
    </location>
</feature>
<feature type="active site" description="Charge relay system" evidence="2">
    <location>
        <position position="111"/>
    </location>
</feature>
<feature type="active site" description="Charge relay system" evidence="2">
    <location>
        <position position="205"/>
    </location>
</feature>
<feature type="disulfide bond" evidence="2">
    <location>
        <begin position="49"/>
        <end position="65"/>
    </location>
</feature>
<feature type="disulfide bond" evidence="2">
    <location>
        <begin position="175"/>
        <end position="189"/>
    </location>
</feature>
<feature type="disulfide bond" evidence="2">
    <location>
        <begin position="201"/>
        <end position="226"/>
    </location>
</feature>
<proteinExistence type="evidence at transcript level"/>
<organism>
    <name type="scientific">Tabanus yao</name>
    <name type="common">Horsefly</name>
    <dbReference type="NCBI Taxonomy" id="485572"/>
    <lineage>
        <taxon>Eukaryota</taxon>
        <taxon>Metazoa</taxon>
        <taxon>Ecdysozoa</taxon>
        <taxon>Arthropoda</taxon>
        <taxon>Hexapoda</taxon>
        <taxon>Insecta</taxon>
        <taxon>Pterygota</taxon>
        <taxon>Neoptera</taxon>
        <taxon>Endopterygota</taxon>
        <taxon>Diptera</taxon>
        <taxon>Brachycera</taxon>
        <taxon>Tabanomorpha</taxon>
        <taxon>Tabanoidea</taxon>
        <taxon>Tabanidae</taxon>
        <taxon>Tabanus</taxon>
    </lineage>
</organism>
<name>SER_TABYA</name>
<accession>C1IBY0</accession>
<reference evidence="7" key="1">
    <citation type="journal article" date="2008" name="Mol. Cell. Proteomics">
        <title>Toward an understanding of the molecular mechanism for successful blood feeding by coupling proteomics analysis with pharmacological testing of horsefly salivary glands.</title>
        <authorList>
            <person name="Xu X."/>
            <person name="Yang H."/>
            <person name="Ma D."/>
            <person name="Wu J."/>
            <person name="Wang Y."/>
            <person name="Song Y."/>
            <person name="Wang X."/>
            <person name="Lu Y."/>
            <person name="Yang J."/>
            <person name="Lai R."/>
        </authorList>
    </citation>
    <scope>NUCLEOTIDE SEQUENCE [MRNA]</scope>
    <scope>SUBCELLULAR LOCATION</scope>
    <scope>FUNCTION</scope>
    <source>
        <tissue>Salivary gland</tissue>
    </source>
</reference>
<protein>
    <recommendedName>
        <fullName evidence="4">Tabserin</fullName>
        <ecNumber evidence="2">3.4.21.-</ecNumber>
    </recommendedName>
</protein>
<keyword id="KW-1203">Blood coagulation cascade inhibiting toxin</keyword>
<keyword id="KW-1015">Disulfide bond</keyword>
<keyword id="KW-1199">Hemostasis impairing toxin</keyword>
<keyword id="KW-0378">Hydrolase</keyword>
<keyword id="KW-0645">Protease</keyword>
<keyword id="KW-0964">Secreted</keyword>
<keyword id="KW-0720">Serine protease</keyword>
<keyword id="KW-0732">Signal</keyword>
<keyword id="KW-0800">Toxin</keyword>
<sequence length="248" mass="27408">MLKYSALFLYLIYVGGSESAHSRIVGGVPVAEEKVPYVVSIRMKEIHVCGGSILSESIVLTAAHCFDKSKGYSNYAVFAGSNRLSGGLKVEIQNITIHPKYIGPSDWWKNDLAVVKLKKPLNFSKSVRTVKIFPSYVPENETVYAYGWGKTIVPFFTLPNVLQKLETKALNLTACQKSWKEHVVESQLCLWTGHGTGVGLCKADSGGPVVYKGKLVGVISWVQVHCNTKKPDVAVRLSPYFENGLRKR</sequence>
<comment type="function">
    <text evidence="3">Serine protease that inhibits blood coagulation in a dose-dependent manner. May act by destroying coagulant factors to inhibit blood coagulation.</text>
</comment>
<comment type="subcellular location">
    <subcellularLocation>
        <location evidence="3">Secreted</location>
    </subcellularLocation>
</comment>
<comment type="tissue specificity">
    <text evidence="6">Expressed in salivary glands.</text>
</comment>
<comment type="similarity">
    <text evidence="5">Belongs to the peptidase S1 family.</text>
</comment>
<dbReference type="EC" id="3.4.21.-" evidence="2"/>
<dbReference type="EMBL" id="EU147250">
    <property type="protein sequence ID" value="ABX80068.1"/>
    <property type="molecule type" value="mRNA"/>
</dbReference>
<dbReference type="SMR" id="C1IBY0"/>
<dbReference type="GO" id="GO:0005576">
    <property type="term" value="C:extracellular region"/>
    <property type="evidence" value="ECO:0007669"/>
    <property type="project" value="UniProtKB-SubCell"/>
</dbReference>
<dbReference type="GO" id="GO:0004252">
    <property type="term" value="F:serine-type endopeptidase activity"/>
    <property type="evidence" value="ECO:0007669"/>
    <property type="project" value="InterPro"/>
</dbReference>
<dbReference type="GO" id="GO:0090729">
    <property type="term" value="F:toxin activity"/>
    <property type="evidence" value="ECO:0007669"/>
    <property type="project" value="UniProtKB-KW"/>
</dbReference>
<dbReference type="GO" id="GO:0006508">
    <property type="term" value="P:proteolysis"/>
    <property type="evidence" value="ECO:0007669"/>
    <property type="project" value="UniProtKB-KW"/>
</dbReference>
<dbReference type="CDD" id="cd00190">
    <property type="entry name" value="Tryp_SPc"/>
    <property type="match status" value="1"/>
</dbReference>
<dbReference type="FunFam" id="2.40.10.10:FF:000068">
    <property type="entry name" value="transmembrane protease serine 2"/>
    <property type="match status" value="1"/>
</dbReference>
<dbReference type="Gene3D" id="2.40.10.10">
    <property type="entry name" value="Trypsin-like serine proteases"/>
    <property type="match status" value="1"/>
</dbReference>
<dbReference type="InterPro" id="IPR050430">
    <property type="entry name" value="Peptidase_S1"/>
</dbReference>
<dbReference type="InterPro" id="IPR009003">
    <property type="entry name" value="Peptidase_S1_PA"/>
</dbReference>
<dbReference type="InterPro" id="IPR043504">
    <property type="entry name" value="Peptidase_S1_PA_chymotrypsin"/>
</dbReference>
<dbReference type="InterPro" id="IPR001314">
    <property type="entry name" value="Peptidase_S1A"/>
</dbReference>
<dbReference type="InterPro" id="IPR001254">
    <property type="entry name" value="Trypsin_dom"/>
</dbReference>
<dbReference type="InterPro" id="IPR018114">
    <property type="entry name" value="TRYPSIN_HIS"/>
</dbReference>
<dbReference type="PANTHER" id="PTHR24276:SF98">
    <property type="entry name" value="FI18310P1-RELATED"/>
    <property type="match status" value="1"/>
</dbReference>
<dbReference type="PANTHER" id="PTHR24276">
    <property type="entry name" value="POLYSERASE-RELATED"/>
    <property type="match status" value="1"/>
</dbReference>
<dbReference type="Pfam" id="PF00089">
    <property type="entry name" value="Trypsin"/>
    <property type="match status" value="1"/>
</dbReference>
<dbReference type="PRINTS" id="PR00722">
    <property type="entry name" value="CHYMOTRYPSIN"/>
</dbReference>
<dbReference type="SMART" id="SM00020">
    <property type="entry name" value="Tryp_SPc"/>
    <property type="match status" value="1"/>
</dbReference>
<dbReference type="SUPFAM" id="SSF50494">
    <property type="entry name" value="Trypsin-like serine proteases"/>
    <property type="match status" value="1"/>
</dbReference>
<dbReference type="PROSITE" id="PS50240">
    <property type="entry name" value="TRYPSIN_DOM"/>
    <property type="match status" value="1"/>
</dbReference>
<dbReference type="PROSITE" id="PS00134">
    <property type="entry name" value="TRYPSIN_HIS"/>
    <property type="match status" value="1"/>
</dbReference>